<protein>
    <recommendedName>
        <fullName evidence="12">Suppressor of cytokine signaling 2</fullName>
        <shortName evidence="11">SOCS-2</shortName>
    </recommendedName>
</protein>
<keyword id="KW-0963">Cytoplasm</keyword>
<keyword id="KW-0341">Growth regulation</keyword>
<keyword id="KW-1017">Isopeptide bond</keyword>
<keyword id="KW-0597">Phosphoprotein</keyword>
<keyword id="KW-1185">Reference proteome</keyword>
<keyword id="KW-0727">SH2 domain</keyword>
<keyword id="KW-0734">Signal transduction inhibitor</keyword>
<keyword id="KW-0832">Ubl conjugation</keyword>
<keyword id="KW-0833">Ubl conjugation pathway</keyword>
<organism>
    <name type="scientific">Mus musculus</name>
    <name type="common">Mouse</name>
    <dbReference type="NCBI Taxonomy" id="10090"/>
    <lineage>
        <taxon>Eukaryota</taxon>
        <taxon>Metazoa</taxon>
        <taxon>Chordata</taxon>
        <taxon>Craniata</taxon>
        <taxon>Vertebrata</taxon>
        <taxon>Euteleostomi</taxon>
        <taxon>Mammalia</taxon>
        <taxon>Eutheria</taxon>
        <taxon>Euarchontoglires</taxon>
        <taxon>Glires</taxon>
        <taxon>Rodentia</taxon>
        <taxon>Myomorpha</taxon>
        <taxon>Muroidea</taxon>
        <taxon>Muridae</taxon>
        <taxon>Murinae</taxon>
        <taxon>Mus</taxon>
        <taxon>Mus</taxon>
    </lineage>
</organism>
<dbReference type="EMBL" id="U88327">
    <property type="protein sequence ID" value="AAB62402.1"/>
    <property type="molecule type" value="mRNA"/>
</dbReference>
<dbReference type="CCDS" id="CCDS24136.1"/>
<dbReference type="RefSeq" id="NP_001162126.1">
    <property type="nucleotide sequence ID" value="NM_001168655.1"/>
</dbReference>
<dbReference type="RefSeq" id="NP_001162127.1">
    <property type="nucleotide sequence ID" value="NM_001168656.1"/>
</dbReference>
<dbReference type="RefSeq" id="NP_001162128.1">
    <property type="nucleotide sequence ID" value="NM_001168657.1"/>
</dbReference>
<dbReference type="RefSeq" id="NP_031732.1">
    <property type="nucleotide sequence ID" value="NM_007706.4"/>
</dbReference>
<dbReference type="RefSeq" id="XP_011241712.1">
    <property type="nucleotide sequence ID" value="XM_011243410.4"/>
</dbReference>
<dbReference type="RefSeq" id="XP_030100890.1">
    <property type="nucleotide sequence ID" value="XM_030245030.2"/>
</dbReference>
<dbReference type="RefSeq" id="XP_036011644.1">
    <property type="nucleotide sequence ID" value="XM_036155751.1"/>
</dbReference>
<dbReference type="RefSeq" id="XP_036011645.1">
    <property type="nucleotide sequence ID" value="XM_036155752.1"/>
</dbReference>
<dbReference type="RefSeq" id="XP_036011646.1">
    <property type="nucleotide sequence ID" value="XM_036155753.1"/>
</dbReference>
<dbReference type="SMR" id="O35717"/>
<dbReference type="BioGRID" id="229727">
    <property type="interactions" value="13"/>
</dbReference>
<dbReference type="FunCoup" id="O35717">
    <property type="interactions" value="208"/>
</dbReference>
<dbReference type="IntAct" id="O35717">
    <property type="interactions" value="3"/>
</dbReference>
<dbReference type="MINT" id="O35717"/>
<dbReference type="STRING" id="10090.ENSMUSP00000020215"/>
<dbReference type="iPTMnet" id="O35717"/>
<dbReference type="PhosphoSitePlus" id="O35717"/>
<dbReference type="PaxDb" id="10090-ENSMUSP00000020215"/>
<dbReference type="ProteomicsDB" id="261315"/>
<dbReference type="Antibodypedia" id="4158">
    <property type="antibodies" value="293 antibodies from 38 providers"/>
</dbReference>
<dbReference type="DNASU" id="216233"/>
<dbReference type="Ensembl" id="ENSMUST00000020215.16">
    <property type="protein sequence ID" value="ENSMUSP00000020215.10"/>
    <property type="gene ID" value="ENSMUSG00000020027.19"/>
</dbReference>
<dbReference type="Ensembl" id="ENSMUST00000119917.2">
    <property type="protein sequence ID" value="ENSMUSP00000113378.2"/>
    <property type="gene ID" value="ENSMUSG00000020027.19"/>
</dbReference>
<dbReference type="Ensembl" id="ENSMUST00000170690.8">
    <property type="protein sequence ID" value="ENSMUSP00000129331.2"/>
    <property type="gene ID" value="ENSMUSG00000020027.19"/>
</dbReference>
<dbReference type="Ensembl" id="ENSMUST00000172070.8">
    <property type="protein sequence ID" value="ENSMUSP00000131875.2"/>
    <property type="gene ID" value="ENSMUSG00000020027.19"/>
</dbReference>
<dbReference type="GeneID" id="216233"/>
<dbReference type="KEGG" id="mmu:216233"/>
<dbReference type="UCSC" id="uc007gwg.2">
    <property type="organism name" value="mouse"/>
</dbReference>
<dbReference type="AGR" id="MGI:1201787"/>
<dbReference type="CTD" id="8835"/>
<dbReference type="MGI" id="MGI:1201787">
    <property type="gene designation" value="Socs2"/>
</dbReference>
<dbReference type="VEuPathDB" id="HostDB:ENSMUSG00000020027"/>
<dbReference type="eggNOG" id="KOG4566">
    <property type="taxonomic scope" value="Eukaryota"/>
</dbReference>
<dbReference type="GeneTree" id="ENSGT00940000157983"/>
<dbReference type="HOGENOM" id="CLU_079452_4_0_1"/>
<dbReference type="InParanoid" id="O35717"/>
<dbReference type="OMA" id="LRKTGWY"/>
<dbReference type="PhylomeDB" id="O35717"/>
<dbReference type="TreeFam" id="TF321368"/>
<dbReference type="Reactome" id="R-MMU-8951664">
    <property type="pathway name" value="Neddylation"/>
</dbReference>
<dbReference type="Reactome" id="R-MMU-9706369">
    <property type="pathway name" value="Negative regulation of FLT3"/>
</dbReference>
<dbReference type="UniPathway" id="UPA00143"/>
<dbReference type="BioGRID-ORCS" id="216233">
    <property type="hits" value="1 hit in 75 CRISPR screens"/>
</dbReference>
<dbReference type="ChiTaRS" id="Socs2">
    <property type="organism name" value="mouse"/>
</dbReference>
<dbReference type="PRO" id="PR:O35717"/>
<dbReference type="Proteomes" id="UP000000589">
    <property type="component" value="Chromosome 10"/>
</dbReference>
<dbReference type="RNAct" id="O35717">
    <property type="molecule type" value="protein"/>
</dbReference>
<dbReference type="Bgee" id="ENSMUSG00000020027">
    <property type="expression patterns" value="Expressed in cumulus cell and 265 other cell types or tissues"/>
</dbReference>
<dbReference type="ExpressionAtlas" id="O35717">
    <property type="expression patterns" value="baseline and differential"/>
</dbReference>
<dbReference type="GO" id="GO:0031466">
    <property type="term" value="C:Cul5-RING ubiquitin ligase complex"/>
    <property type="evidence" value="ECO:0000250"/>
    <property type="project" value="UniProtKB"/>
</dbReference>
<dbReference type="GO" id="GO:0005737">
    <property type="term" value="C:cytoplasm"/>
    <property type="evidence" value="ECO:0007669"/>
    <property type="project" value="UniProtKB-SubCell"/>
</dbReference>
<dbReference type="GO" id="GO:0005131">
    <property type="term" value="F:growth hormone receptor binding"/>
    <property type="evidence" value="ECO:0000353"/>
    <property type="project" value="MGI"/>
</dbReference>
<dbReference type="GO" id="GO:0005159">
    <property type="term" value="F:insulin-like growth factor receptor binding"/>
    <property type="evidence" value="ECO:0000250"/>
    <property type="project" value="UniProtKB"/>
</dbReference>
<dbReference type="GO" id="GO:0140031">
    <property type="term" value="F:phosphorylation-dependent protein binding"/>
    <property type="evidence" value="ECO:0000315"/>
    <property type="project" value="UniProtKB"/>
</dbReference>
<dbReference type="GO" id="GO:1990756">
    <property type="term" value="F:ubiquitin-like ligase-substrate adaptor activity"/>
    <property type="evidence" value="ECO:0000250"/>
    <property type="project" value="UniProtKB"/>
</dbReference>
<dbReference type="GO" id="GO:0007259">
    <property type="term" value="P:cell surface receptor signaling pathway via JAK-STAT"/>
    <property type="evidence" value="ECO:0000316"/>
    <property type="project" value="MGI"/>
</dbReference>
<dbReference type="GO" id="GO:0060396">
    <property type="term" value="P:growth hormone receptor signaling pathway"/>
    <property type="evidence" value="ECO:0007669"/>
    <property type="project" value="Ensembl"/>
</dbReference>
<dbReference type="GO" id="GO:0035556">
    <property type="term" value="P:intracellular signal transduction"/>
    <property type="evidence" value="ECO:0000315"/>
    <property type="project" value="MGI"/>
</dbReference>
<dbReference type="GO" id="GO:0007595">
    <property type="term" value="P:lactation"/>
    <property type="evidence" value="ECO:0000315"/>
    <property type="project" value="MGI"/>
</dbReference>
<dbReference type="GO" id="GO:0060749">
    <property type="term" value="P:mammary gland alveolus development"/>
    <property type="evidence" value="ECO:0000315"/>
    <property type="project" value="MGI"/>
</dbReference>
<dbReference type="GO" id="GO:0060400">
    <property type="term" value="P:negative regulation of growth hormone receptor signaling pathway"/>
    <property type="evidence" value="ECO:0000315"/>
    <property type="project" value="UniProtKB"/>
</dbReference>
<dbReference type="GO" id="GO:0040015">
    <property type="term" value="P:negative regulation of multicellular organism growth"/>
    <property type="evidence" value="ECO:0000315"/>
    <property type="project" value="MGI"/>
</dbReference>
<dbReference type="GO" id="GO:0046426">
    <property type="term" value="P:negative regulation of receptor signaling pathway via JAK-STAT"/>
    <property type="evidence" value="ECO:0000316"/>
    <property type="project" value="MGI"/>
</dbReference>
<dbReference type="GO" id="GO:0045666">
    <property type="term" value="P:positive regulation of neuron differentiation"/>
    <property type="evidence" value="ECO:0000314"/>
    <property type="project" value="MGI"/>
</dbReference>
<dbReference type="GO" id="GO:0043161">
    <property type="term" value="P:proteasome-mediated ubiquitin-dependent protein catabolic process"/>
    <property type="evidence" value="ECO:0000250"/>
    <property type="project" value="UniProtKB"/>
</dbReference>
<dbReference type="GO" id="GO:0016567">
    <property type="term" value="P:protein ubiquitination"/>
    <property type="evidence" value="ECO:0007669"/>
    <property type="project" value="UniProtKB-UniPathway"/>
</dbReference>
<dbReference type="GO" id="GO:0040014">
    <property type="term" value="P:regulation of multicellular organism growth"/>
    <property type="evidence" value="ECO:0000315"/>
    <property type="project" value="MGI"/>
</dbReference>
<dbReference type="GO" id="GO:0032355">
    <property type="term" value="P:response to estradiol"/>
    <property type="evidence" value="ECO:0007669"/>
    <property type="project" value="Ensembl"/>
</dbReference>
<dbReference type="CDD" id="cd10383">
    <property type="entry name" value="SH2_SOCS2"/>
    <property type="match status" value="1"/>
</dbReference>
<dbReference type="CDD" id="cd03736">
    <property type="entry name" value="SOCS_SOCS2"/>
    <property type="match status" value="1"/>
</dbReference>
<dbReference type="FunFam" id="1.10.750.20:FF:000002">
    <property type="entry name" value="Suppressor of cytokine signaling 2"/>
    <property type="match status" value="1"/>
</dbReference>
<dbReference type="FunFam" id="3.30.505.10:FF:000049">
    <property type="entry name" value="Suppressor of cytokine signaling 2"/>
    <property type="match status" value="1"/>
</dbReference>
<dbReference type="Gene3D" id="3.30.505.10">
    <property type="entry name" value="SH2 domain"/>
    <property type="match status" value="1"/>
</dbReference>
<dbReference type="Gene3D" id="1.10.750.20">
    <property type="entry name" value="SOCS box"/>
    <property type="match status" value="1"/>
</dbReference>
<dbReference type="InterPro" id="IPR000980">
    <property type="entry name" value="SH2"/>
</dbReference>
<dbReference type="InterPro" id="IPR036860">
    <property type="entry name" value="SH2_dom_sf"/>
</dbReference>
<dbReference type="InterPro" id="IPR035862">
    <property type="entry name" value="SOCS2_SH2"/>
</dbReference>
<dbReference type="InterPro" id="IPR028410">
    <property type="entry name" value="SOCS2_SOCS_box"/>
</dbReference>
<dbReference type="InterPro" id="IPR001496">
    <property type="entry name" value="SOCS_box"/>
</dbReference>
<dbReference type="InterPro" id="IPR036036">
    <property type="entry name" value="SOCS_box-like_dom_sf"/>
</dbReference>
<dbReference type="PANTHER" id="PTHR10155">
    <property type="entry name" value="PHOSPHATIDYLINOSITOL 3-KINASE REGULATORY SUBUNIT"/>
    <property type="match status" value="1"/>
</dbReference>
<dbReference type="PANTHER" id="PTHR10155:SF7">
    <property type="entry name" value="SUPPRESSOR OF CYTOKINE SIGNALING 2"/>
    <property type="match status" value="1"/>
</dbReference>
<dbReference type="Pfam" id="PF00017">
    <property type="entry name" value="SH2"/>
    <property type="match status" value="1"/>
</dbReference>
<dbReference type="Pfam" id="PF07525">
    <property type="entry name" value="SOCS_box"/>
    <property type="match status" value="1"/>
</dbReference>
<dbReference type="PRINTS" id="PR00401">
    <property type="entry name" value="SH2DOMAIN"/>
</dbReference>
<dbReference type="SMART" id="SM00252">
    <property type="entry name" value="SH2"/>
    <property type="match status" value="1"/>
</dbReference>
<dbReference type="SMART" id="SM00253">
    <property type="entry name" value="SOCS"/>
    <property type="match status" value="1"/>
</dbReference>
<dbReference type="SMART" id="SM00969">
    <property type="entry name" value="SOCS_box"/>
    <property type="match status" value="1"/>
</dbReference>
<dbReference type="SUPFAM" id="SSF55550">
    <property type="entry name" value="SH2 domain"/>
    <property type="match status" value="1"/>
</dbReference>
<dbReference type="SUPFAM" id="SSF158235">
    <property type="entry name" value="SOCS box-like"/>
    <property type="match status" value="1"/>
</dbReference>
<dbReference type="PROSITE" id="PS50001">
    <property type="entry name" value="SH2"/>
    <property type="match status" value="1"/>
</dbReference>
<dbReference type="PROSITE" id="PS50225">
    <property type="entry name" value="SOCS"/>
    <property type="match status" value="1"/>
</dbReference>
<feature type="chain" id="PRO_0000181239" description="Suppressor of cytokine signaling 2">
    <location>
        <begin position="1"/>
        <end position="198"/>
    </location>
</feature>
<feature type="domain" description="SH2" evidence="2">
    <location>
        <begin position="48"/>
        <end position="156"/>
    </location>
</feature>
<feature type="domain" description="SOCS box" evidence="3">
    <location>
        <begin position="151"/>
        <end position="197"/>
    </location>
</feature>
<feature type="region of interest" description="Interaction with AREL1" evidence="1">
    <location>
        <begin position="1"/>
        <end position="75"/>
    </location>
</feature>
<feature type="region of interest" description="Disordered" evidence="4">
    <location>
        <begin position="1"/>
        <end position="29"/>
    </location>
</feature>
<feature type="modified residue" description="Phosphoserine" evidence="1">
    <location>
        <position position="30"/>
    </location>
</feature>
<feature type="modified residue" description="Phosphoserine; by PKC" evidence="9">
    <location>
        <position position="52"/>
    </location>
</feature>
<feature type="cross-link" description="Glycyl lysine isopeptide (Lys-Gly) (interchain with G-Cter in ubiquitin)" evidence="1">
    <location>
        <position position="173"/>
    </location>
</feature>
<comment type="function">
    <text evidence="1 6 8">Substrate-recognition component of a cullin-5-RING E3 ubiquitin-protein ligase complex (ECS complex, also named CRL5 complex), which mediates the ubiquitination and subsequent proteasomal degradation of target proteins, such as EPOR and GHR (By similarity). Specifically recognizes and binds phosphorylated proteins via its SH2 domain, promoting their ubiquitination (By similarity). The ECS(SOCS2) complex acts as a key regulator of growth hormone receptor (GHR) levels by mediating ubiquitination and degradation of GHR, following GHR phosphorylation by JAK2 (PubMed:10890450, PubMed:15690087). The ECS(SOCS2) also catalyzes ubiquitination and degradation of JAK2-phosphorylated EPOR (By similarity).</text>
</comment>
<comment type="pathway">
    <text evidence="1">Protein modification; protein ubiquitination.</text>
</comment>
<comment type="subunit">
    <text evidence="1">Substrate-recognition component of the ECS(SOCS2) complex, composed of SOCS2, CUL5, ELOB, ELOC and RNF7/RBX2 (By similarity). Interacts with IGF1R. Interacts with DCUN1D1 (By similarity).</text>
</comment>
<comment type="subcellular location">
    <subcellularLocation>
        <location evidence="1">Cytoplasm</location>
    </subcellularLocation>
</comment>
<comment type="tissue specificity">
    <text evidence="10">Expressed primarily in the testis, some expression in liver and lung.</text>
</comment>
<comment type="developmental stage">
    <text evidence="5">In the developing brain, expressed at relatively high levels from 10 dpc stages to young adulthood (P25) with peak levels from 14 dpc to P8. Levels of SOCS2 increase dramatically between 10 dpc and 12 dpc. At 12 dpc, high expression found in the olfactory epithelium with moderate expression in the neuroepithelium of the neocortex, presumptive striatum, hippocampus and septum. Low expression in the retina. At 14 dpc, in the cortical wall, levels increase in the cortical plate and decrease in the intermediate zone. High expression also in the hippocampus, fimbria, thalamic neuroepithelium and innermost layer of the retina. At P8, high expression in the neurons of the hippocampus. Lower levels found in the dentate gyrus. Levels of expression decrease between P8 and P15 and remain constant until P25. In adulthood, levels decrease. In the peripheral nervous system, expression found at low levels at 14 dpc in a subpopulation of neurons in the dorsal root ganglion.</text>
</comment>
<comment type="domain">
    <text evidence="1">The SOCS box domain mediates the interaction with the Elongin BC complex, an adapter module in different E3 ubiquitin ligase complexes.</text>
</comment>
<comment type="PTM">
    <text evidence="9">Ubiquitinated; mediated by AREL1 and leading to its subsequent proteasomal degradation (PubMed:31578312). Ubiquitination is dependent on phosphorylation at Ser-52, by PKC and is stimulated by LPS (PubMed:31578312).</text>
</comment>
<comment type="PTM">
    <text evidence="9">Phosphorylation at Ser-52 by PKC facilitates its ubiquitination and proteasomal degradation.</text>
</comment>
<comment type="disruption phenotype">
    <text evidence="6 7">Mice deficient in Socs2 display gigantism: mice display considerable weight increase (30-40% more than normal) after 3 weeks of age (PubMed:10890450). This is attributable to increase in visceral organ weight, carcass weight, long bone length and body length (PubMed:10890450). In addition there is a thickening of the dermis due to excess collagen accumulation (PubMed:10890450). Gigantism is caused by up-regulation of growth hormone receptor signaling pathway (PubMed:12040024).</text>
</comment>
<gene>
    <name evidence="11 13" type="primary">Socs2</name>
</gene>
<proteinExistence type="evidence at protein level"/>
<name>SOCS2_MOUSE</name>
<evidence type="ECO:0000250" key="1">
    <source>
        <dbReference type="UniProtKB" id="O14508"/>
    </source>
</evidence>
<evidence type="ECO:0000255" key="2">
    <source>
        <dbReference type="PROSITE-ProRule" id="PRU00191"/>
    </source>
</evidence>
<evidence type="ECO:0000255" key="3">
    <source>
        <dbReference type="PROSITE-ProRule" id="PRU00194"/>
    </source>
</evidence>
<evidence type="ECO:0000256" key="4">
    <source>
        <dbReference type="SAM" id="MobiDB-lite"/>
    </source>
</evidence>
<evidence type="ECO:0000269" key="5">
    <source>
    </source>
</evidence>
<evidence type="ECO:0000269" key="6">
    <source>
    </source>
</evidence>
<evidence type="ECO:0000269" key="7">
    <source>
    </source>
</evidence>
<evidence type="ECO:0000269" key="8">
    <source>
    </source>
</evidence>
<evidence type="ECO:0000269" key="9">
    <source>
    </source>
</evidence>
<evidence type="ECO:0000269" key="10">
    <source>
    </source>
</evidence>
<evidence type="ECO:0000303" key="11">
    <source>
    </source>
</evidence>
<evidence type="ECO:0000305" key="12"/>
<evidence type="ECO:0000312" key="13">
    <source>
        <dbReference type="MGI" id="MGI:1201787"/>
    </source>
</evidence>
<sequence>MTLRCLEPSGNGADRTRSQWGTAGLPEEQSPEAARLAKALRELSQTGWYWGSMTVNEAKEKLKEAPEGTFLIRDSSHSDYLLTISVKTSAGPTNLRIEYQDGKFRLDSIICVKSKLKQFDSVVHLIDYYVQMCKDKRTGPEAPRNGTVHLYLTKPLYTSAPTLQHFCRLAINKCTGTIWGLPLPTRLKDYLEEYKFQV</sequence>
<accession>O35717</accession>
<reference key="1">
    <citation type="journal article" date="1997" name="Nature">
        <title>A family of cytokine-inducible inhibitors of signaling.</title>
        <authorList>
            <person name="Starr R."/>
            <person name="Willson T.A."/>
            <person name="Viney E.M."/>
            <person name="Murray L.J.L."/>
            <person name="Rayner J.R."/>
            <person name="Jenkins B.J."/>
            <person name="Gonda T.J."/>
            <person name="Alexander W.S."/>
            <person name="Metcalf D."/>
            <person name="Nicola N.A."/>
            <person name="Hilton D.J."/>
        </authorList>
    </citation>
    <scope>NUCLEOTIDE SEQUENCE [MRNA]</scope>
    <scope>TISSUE SPECIFICITY</scope>
    <source>
        <tissue>Thymus</tissue>
    </source>
</reference>
<reference key="2">
    <citation type="journal article" date="2000" name="J. Comp. Neurol.">
        <title>Expression of 'suppressor of cytokine signaling' (SOCS) genes in the developing and adult mouse nervous system.</title>
        <authorList>
            <person name="Polizzotto M.N."/>
            <person name="Bartlett P.F."/>
            <person name="Turnley A.M."/>
        </authorList>
    </citation>
    <scope>DEVELOPMENTAL STAGE</scope>
</reference>
<reference key="3">
    <citation type="journal article" date="2000" name="Nature">
        <title>Gigantism in mice lacking suppressor of cytokine signalling-2.</title>
        <authorList>
            <person name="Metcalf D."/>
            <person name="Greenhalgh C.J."/>
            <person name="Viney E."/>
            <person name="Willson T.A."/>
            <person name="Starr R."/>
            <person name="Nicola N.A."/>
            <person name="Hilton D.J."/>
            <person name="Alexander W.S."/>
        </authorList>
    </citation>
    <scope>FUNCTION</scope>
    <scope>DISRUPTION PHENOTYPE</scope>
</reference>
<reference key="4">
    <citation type="journal article" date="2002" name="Mol. Endocrinol.">
        <title>Growth enhancement in suppressor of cytokine signaling 2 (SOCS-2)-deficient mice is dependent on signal transducer and activator of transcription 5b (STAT5b).</title>
        <authorList>
            <person name="Greenhalgh C.J."/>
            <person name="Bertolino P."/>
            <person name="Asa S.L."/>
            <person name="Metcalf D."/>
            <person name="Corbin J.E."/>
            <person name="Adams T.E."/>
            <person name="Davey H.W."/>
            <person name="Nicola N.A."/>
            <person name="Hilton D.J."/>
            <person name="Alexander W.S."/>
        </authorList>
    </citation>
    <scope>DISRUPTION PHENOTYPE</scope>
</reference>
<reference key="5">
    <citation type="journal article" date="2005" name="J. Clin. Invest.">
        <title>SOCS2 negatively regulates growth hormone action in vitro and in vivo.</title>
        <authorList>
            <person name="Greenhalgh C.J."/>
            <person name="Rico-Bautista E."/>
            <person name="Lorentzon M."/>
            <person name="Thaus A.L."/>
            <person name="Morgan P.O."/>
            <person name="Willson T.A."/>
            <person name="Zervoudakis P."/>
            <person name="Metcalf D."/>
            <person name="Street I."/>
            <person name="Nicola N.A."/>
            <person name="Nash A.D."/>
            <person name="Fabri L.J."/>
            <person name="Norstedt G."/>
            <person name="Ohlsson C."/>
            <person name="Flores-Morales A."/>
            <person name="Alexander W.S."/>
            <person name="Hilton D.J."/>
        </authorList>
    </citation>
    <scope>FUNCTION</scope>
</reference>
<reference key="6">
    <citation type="journal article" date="2019" name="JCI Insight">
        <title>KIAA0317 regulates pulmonary inflammation through SOCS2 degradation.</title>
        <authorList>
            <person name="Lear T.B."/>
            <person name="McKelvey A.C."/>
            <person name="Evankovich J.W."/>
            <person name="Rajbhandari S."/>
            <person name="Coon T.A."/>
            <person name="Dunn S.R."/>
            <person name="Londino J.D."/>
            <person name="McVerry B.J."/>
            <person name="Zhang Y."/>
            <person name="Valenzi E."/>
            <person name="Burton C.L."/>
            <person name="Gordon R."/>
            <person name="Gingras S."/>
            <person name="Lockwood K.C."/>
            <person name="Jurczak M.J."/>
            <person name="Lafyatis R."/>
            <person name="Shlomchik M.J."/>
            <person name="Liu Y."/>
            <person name="Chen B.B."/>
        </authorList>
    </citation>
    <scope>UBIQUITINATION AT LYS-173</scope>
    <scope>PROTEASOMAL DEGRADATION</scope>
    <scope>PHOSPHORYLATION AT SER-52</scope>
</reference>